<proteinExistence type="evidence at protein level"/>
<protein>
    <recommendedName>
        <fullName>Lupus La protein homolog</fullName>
    </recommendedName>
    <alternativeName>
        <fullName>La autoantigen homolog</fullName>
    </alternativeName>
    <alternativeName>
        <fullName>La ribonucleoprotein</fullName>
    </alternativeName>
</protein>
<accession>P38656</accession>
<reference key="1">
    <citation type="journal article" date="1993" name="Gene">
        <title>Isolation of rat cDNA clones coding for the autoantigen SS-B/La: detection of species-specific variations.</title>
        <authorList>
            <person name="Semsei I."/>
            <person name="Troester H."/>
            <person name="Bartsch H."/>
            <person name="Schwemmle M."/>
            <person name="Igloi G.L."/>
            <person name="Bachmann M."/>
        </authorList>
    </citation>
    <scope>NUCLEOTIDE SEQUENCE [MRNA]</scope>
</reference>
<reference key="2">
    <citation type="journal article" date="2012" name="Nat. Commun.">
        <title>Quantitative maps of protein phosphorylation sites across 14 different rat organs and tissues.</title>
        <authorList>
            <person name="Lundby A."/>
            <person name="Secher A."/>
            <person name="Lage K."/>
            <person name="Nordsborg N.B."/>
            <person name="Dmytriyev A."/>
            <person name="Lundby C."/>
            <person name="Olsen J.V."/>
        </authorList>
    </citation>
    <scope>PHOSPHORYLATION [LARGE SCALE ANALYSIS] AT SER-92</scope>
    <scope>IDENTIFICATION BY MASS SPECTROMETRY [LARGE SCALE ANALYSIS]</scope>
</reference>
<keyword id="KW-0007">Acetylation</keyword>
<keyword id="KW-0539">Nucleus</keyword>
<keyword id="KW-0597">Phosphoprotein</keyword>
<keyword id="KW-1185">Reference proteome</keyword>
<keyword id="KW-0694">RNA-binding</keyword>
<dbReference type="EMBL" id="X67859">
    <property type="protein sequence ID" value="CAA48043.1"/>
    <property type="molecule type" value="mRNA"/>
</dbReference>
<dbReference type="PIR" id="JC1494">
    <property type="entry name" value="JC1494"/>
</dbReference>
<dbReference type="SMR" id="P38656"/>
<dbReference type="DIP" id="DIP-46500N"/>
<dbReference type="FunCoup" id="P38656">
    <property type="interactions" value="4161"/>
</dbReference>
<dbReference type="IntAct" id="P38656">
    <property type="interactions" value="4"/>
</dbReference>
<dbReference type="STRING" id="10116.ENSRNOP00000011175"/>
<dbReference type="iPTMnet" id="P38656"/>
<dbReference type="PhosphoSitePlus" id="P38656"/>
<dbReference type="jPOST" id="P38656"/>
<dbReference type="PaxDb" id="10116-ENSRNOP00000011175"/>
<dbReference type="UCSC" id="RGD:620804">
    <property type="organism name" value="rat"/>
</dbReference>
<dbReference type="AGR" id="RGD:620804"/>
<dbReference type="RGD" id="620804">
    <property type="gene designation" value="Ssb"/>
</dbReference>
<dbReference type="eggNOG" id="KOG4213">
    <property type="taxonomic scope" value="Eukaryota"/>
</dbReference>
<dbReference type="InParanoid" id="P38656"/>
<dbReference type="PhylomeDB" id="P38656"/>
<dbReference type="PRO" id="PR:P38656"/>
<dbReference type="Proteomes" id="UP000002494">
    <property type="component" value="Unplaced"/>
</dbReference>
<dbReference type="GO" id="GO:0005737">
    <property type="term" value="C:cytoplasm"/>
    <property type="evidence" value="ECO:0000266"/>
    <property type="project" value="RGD"/>
</dbReference>
<dbReference type="GO" id="GO:0010494">
    <property type="term" value="C:cytoplasmic stress granule"/>
    <property type="evidence" value="ECO:0000318"/>
    <property type="project" value="GO_Central"/>
</dbReference>
<dbReference type="GO" id="GO:0005829">
    <property type="term" value="C:cytosol"/>
    <property type="evidence" value="ECO:0000318"/>
    <property type="project" value="GO_Central"/>
</dbReference>
<dbReference type="GO" id="GO:0005634">
    <property type="term" value="C:nucleus"/>
    <property type="evidence" value="ECO:0000266"/>
    <property type="project" value="RGD"/>
</dbReference>
<dbReference type="GO" id="GO:1990904">
    <property type="term" value="C:ribonucleoprotein complex"/>
    <property type="evidence" value="ECO:0007669"/>
    <property type="project" value="InterPro"/>
</dbReference>
<dbReference type="GO" id="GO:0003729">
    <property type="term" value="F:mRNA binding"/>
    <property type="evidence" value="ECO:0000318"/>
    <property type="project" value="GO_Central"/>
</dbReference>
<dbReference type="GO" id="GO:0008266">
    <property type="term" value="F:poly(U) RNA binding"/>
    <property type="evidence" value="ECO:0000266"/>
    <property type="project" value="RGD"/>
</dbReference>
<dbReference type="GO" id="GO:0003723">
    <property type="term" value="F:RNA binding"/>
    <property type="evidence" value="ECO:0000266"/>
    <property type="project" value="RGD"/>
</dbReference>
<dbReference type="GO" id="GO:1990825">
    <property type="term" value="F:sequence-specific mRNA binding"/>
    <property type="evidence" value="ECO:0000266"/>
    <property type="project" value="RGD"/>
</dbReference>
<dbReference type="GO" id="GO:0000049">
    <property type="term" value="F:tRNA binding"/>
    <property type="evidence" value="ECO:0000266"/>
    <property type="project" value="RGD"/>
</dbReference>
<dbReference type="GO" id="GO:0075522">
    <property type="term" value="P:IRES-dependent viral translational initiation"/>
    <property type="evidence" value="ECO:0000266"/>
    <property type="project" value="RGD"/>
</dbReference>
<dbReference type="GO" id="GO:0071045">
    <property type="term" value="P:nuclear histone mRNA catabolic process"/>
    <property type="evidence" value="ECO:0000266"/>
    <property type="project" value="RGD"/>
</dbReference>
<dbReference type="GO" id="GO:0045727">
    <property type="term" value="P:positive regulation of translation"/>
    <property type="evidence" value="ECO:0000318"/>
    <property type="project" value="GO_Central"/>
</dbReference>
<dbReference type="GO" id="GO:1903608">
    <property type="term" value="P:protein localization to cytoplasmic stress granule"/>
    <property type="evidence" value="ECO:0000266"/>
    <property type="project" value="RGD"/>
</dbReference>
<dbReference type="GO" id="GO:0042780">
    <property type="term" value="P:tRNA 3'-end processing"/>
    <property type="evidence" value="ECO:0000266"/>
    <property type="project" value="RGD"/>
</dbReference>
<dbReference type="GO" id="GO:0001682">
    <property type="term" value="P:tRNA 5'-leader removal"/>
    <property type="evidence" value="ECO:0000266"/>
    <property type="project" value="RGD"/>
</dbReference>
<dbReference type="GO" id="GO:0006409">
    <property type="term" value="P:tRNA export from nucleus"/>
    <property type="evidence" value="ECO:0000266"/>
    <property type="project" value="RGD"/>
</dbReference>
<dbReference type="GO" id="GO:0008033">
    <property type="term" value="P:tRNA processing"/>
    <property type="evidence" value="ECO:0000315"/>
    <property type="project" value="RGD"/>
</dbReference>
<dbReference type="CDD" id="cd08028">
    <property type="entry name" value="LARP_3"/>
    <property type="match status" value="1"/>
</dbReference>
<dbReference type="CDD" id="cd12291">
    <property type="entry name" value="RRM1_La"/>
    <property type="match status" value="1"/>
</dbReference>
<dbReference type="CDD" id="cd12541">
    <property type="entry name" value="RRM2_La"/>
    <property type="match status" value="1"/>
</dbReference>
<dbReference type="FunFam" id="3.30.70.330:FF:000366">
    <property type="entry name" value="Lupus La protein homolog"/>
    <property type="match status" value="1"/>
</dbReference>
<dbReference type="FunFam" id="1.10.10.10:FF:000336">
    <property type="entry name" value="lupus La protein homolog"/>
    <property type="match status" value="1"/>
</dbReference>
<dbReference type="Gene3D" id="3.30.70.330">
    <property type="match status" value="2"/>
</dbReference>
<dbReference type="Gene3D" id="1.10.10.10">
    <property type="entry name" value="Winged helix-like DNA-binding domain superfamily/Winged helix DNA-binding domain"/>
    <property type="match status" value="1"/>
</dbReference>
<dbReference type="InterPro" id="IPR045180">
    <property type="entry name" value="La_dom_prot"/>
</dbReference>
<dbReference type="InterPro" id="IPR006630">
    <property type="entry name" value="La_HTH"/>
</dbReference>
<dbReference type="InterPro" id="IPR014886">
    <property type="entry name" value="La_xRRM"/>
</dbReference>
<dbReference type="InterPro" id="IPR002344">
    <property type="entry name" value="Lupus_La"/>
</dbReference>
<dbReference type="InterPro" id="IPR012677">
    <property type="entry name" value="Nucleotide-bd_a/b_plait_sf"/>
</dbReference>
<dbReference type="InterPro" id="IPR035979">
    <property type="entry name" value="RBD_domain_sf"/>
</dbReference>
<dbReference type="InterPro" id="IPR000504">
    <property type="entry name" value="RRM_dom"/>
</dbReference>
<dbReference type="InterPro" id="IPR036388">
    <property type="entry name" value="WH-like_DNA-bd_sf"/>
</dbReference>
<dbReference type="InterPro" id="IPR036390">
    <property type="entry name" value="WH_DNA-bd_sf"/>
</dbReference>
<dbReference type="PANTHER" id="PTHR22792:SF166">
    <property type="entry name" value="LUPUS LA PROTEIN HOMOLOG"/>
    <property type="match status" value="1"/>
</dbReference>
<dbReference type="PANTHER" id="PTHR22792">
    <property type="entry name" value="LUPUS LA PROTEIN-RELATED"/>
    <property type="match status" value="1"/>
</dbReference>
<dbReference type="Pfam" id="PF05383">
    <property type="entry name" value="La"/>
    <property type="match status" value="1"/>
</dbReference>
<dbReference type="Pfam" id="PF00076">
    <property type="entry name" value="RRM_1"/>
    <property type="match status" value="1"/>
</dbReference>
<dbReference type="Pfam" id="PF08777">
    <property type="entry name" value="RRM_3"/>
    <property type="match status" value="1"/>
</dbReference>
<dbReference type="PRINTS" id="PR00302">
    <property type="entry name" value="LUPUSLA"/>
</dbReference>
<dbReference type="SMART" id="SM00715">
    <property type="entry name" value="LA"/>
    <property type="match status" value="1"/>
</dbReference>
<dbReference type="SMART" id="SM00360">
    <property type="entry name" value="RRM"/>
    <property type="match status" value="1"/>
</dbReference>
<dbReference type="SUPFAM" id="SSF54928">
    <property type="entry name" value="RNA-binding domain, RBD"/>
    <property type="match status" value="2"/>
</dbReference>
<dbReference type="SUPFAM" id="SSF46785">
    <property type="entry name" value="Winged helix' DNA-binding domain"/>
    <property type="match status" value="1"/>
</dbReference>
<dbReference type="PROSITE" id="PS50961">
    <property type="entry name" value="HTH_LA"/>
    <property type="match status" value="1"/>
</dbReference>
<dbReference type="PROSITE" id="PS50102">
    <property type="entry name" value="RRM"/>
    <property type="match status" value="1"/>
</dbReference>
<dbReference type="PROSITE" id="PS51939">
    <property type="entry name" value="XRRM"/>
    <property type="match status" value="1"/>
</dbReference>
<evidence type="ECO:0000250" key="1"/>
<evidence type="ECO:0000250" key="2">
    <source>
        <dbReference type="UniProtKB" id="P05455"/>
    </source>
</evidence>
<evidence type="ECO:0000250" key="3">
    <source>
        <dbReference type="UniProtKB" id="P32067"/>
    </source>
</evidence>
<evidence type="ECO:0000255" key="4">
    <source>
        <dbReference type="PROSITE-ProRule" id="PRU00176"/>
    </source>
</evidence>
<evidence type="ECO:0000255" key="5">
    <source>
        <dbReference type="PROSITE-ProRule" id="PRU00332"/>
    </source>
</evidence>
<evidence type="ECO:0000255" key="6">
    <source>
        <dbReference type="PROSITE-ProRule" id="PRU01288"/>
    </source>
</evidence>
<evidence type="ECO:0000256" key="7">
    <source>
        <dbReference type="SAM" id="MobiDB-lite"/>
    </source>
</evidence>
<evidence type="ECO:0000305" key="8"/>
<evidence type="ECO:0007744" key="9">
    <source>
    </source>
</evidence>
<name>LA_RAT</name>
<sequence length="415" mass="47777">MAENGDNEKMAALEAKICHQIEYYFGDFNLPRDKFLKEQIKLDEGWVPLETMIKFNRLNRLTTDFNVIVQALSKSKANLMEVSADKTKIRRSPSRPLPEVTDEYKNDVKNRSVYIKGFPTDATLDDIKEWLDDKGQILNIQMRRTLHKTFKGSIFAVFDSIQSAKKFVDTPGQKYKDTNLLILFKEDYFAKKNEERKQSKVEAKLKAKQEHEGRHKPGSTETRALEGKMGCLLKFSGDLDDQTCREDFHFLFSNHGEIKWIDFVRGAKEGIILFKEKAKDALEKARSANNGNLLLRNKKVTWKVLEGHAEKDAMKKITDDQQESLNKWKSKGGHAARRFKGSHVFTAARRFKGRGKGNRPAYAGAPKGRGQFQGRRTRFDDDDHRRGPVKRGIDGRDREEPASKHKKRENGARDK</sequence>
<organism>
    <name type="scientific">Rattus norvegicus</name>
    <name type="common">Rat</name>
    <dbReference type="NCBI Taxonomy" id="10116"/>
    <lineage>
        <taxon>Eukaryota</taxon>
        <taxon>Metazoa</taxon>
        <taxon>Chordata</taxon>
        <taxon>Craniata</taxon>
        <taxon>Vertebrata</taxon>
        <taxon>Euteleostomi</taxon>
        <taxon>Mammalia</taxon>
        <taxon>Eutheria</taxon>
        <taxon>Euarchontoglires</taxon>
        <taxon>Glires</taxon>
        <taxon>Rodentia</taxon>
        <taxon>Myomorpha</taxon>
        <taxon>Muroidea</taxon>
        <taxon>Muridae</taxon>
        <taxon>Murinae</taxon>
        <taxon>Rattus</taxon>
    </lineage>
</organism>
<comment type="function">
    <text>Binds to the 3' poly(U) terminus of nascent RNA polymerase III transcripts, protecting them from exonuclease digestion and facilitating their folding and maturation.</text>
</comment>
<comment type="subunit">
    <text evidence="1">Interacts with DDX15. May interact with RUFY1 (By similarity).</text>
</comment>
<comment type="interaction">
    <interactant intactId="EBI-15649175">
        <id>P38656</id>
    </interactant>
    <interactant intactId="EBI-7253100">
        <id>Q5I0H3</id>
        <label>Sumo1</label>
    </interactant>
    <organismsDiffer>false</organismsDiffer>
    <experiments>3</experiments>
</comment>
<comment type="subcellular location">
    <subcellularLocation>
        <location evidence="8">Nucleus</location>
    </subcellularLocation>
</comment>
<comment type="PTM">
    <text evidence="1">Phosphorylated.</text>
</comment>
<feature type="chain" id="PRO_0000207602" description="Lupus La protein homolog">
    <location>
        <begin position="1"/>
        <end position="415"/>
    </location>
</feature>
<feature type="domain" description="HTH La-type RNA-binding" evidence="5">
    <location>
        <begin position="7"/>
        <end position="99"/>
    </location>
</feature>
<feature type="domain" description="RRM" evidence="4">
    <location>
        <begin position="111"/>
        <end position="187"/>
    </location>
</feature>
<feature type="domain" description="xRRM" evidence="6">
    <location>
        <begin position="226"/>
        <end position="343"/>
    </location>
</feature>
<feature type="region of interest" description="Disordered" evidence="7">
    <location>
        <begin position="323"/>
        <end position="415"/>
    </location>
</feature>
<feature type="compositionally biased region" description="Basic residues" evidence="7">
    <location>
        <begin position="328"/>
        <end position="341"/>
    </location>
</feature>
<feature type="compositionally biased region" description="Basic and acidic residues" evidence="7">
    <location>
        <begin position="377"/>
        <end position="415"/>
    </location>
</feature>
<feature type="modified residue" description="Phosphoserine" evidence="9">
    <location>
        <position position="92"/>
    </location>
</feature>
<feature type="modified residue" description="Phosphoserine" evidence="2">
    <location>
        <position position="94"/>
    </location>
</feature>
<feature type="modified residue" description="N6-acetyllysine" evidence="2">
    <location>
        <position position="116"/>
    </location>
</feature>
<feature type="modified residue" description="Phosphothreonine" evidence="2">
    <location>
        <position position="120"/>
    </location>
</feature>
<feature type="modified residue" description="N6-acetyllysine" evidence="2">
    <location>
        <position position="128"/>
    </location>
</feature>
<feature type="modified residue" description="N6-acetyllysine" evidence="2">
    <location>
        <position position="327"/>
    </location>
</feature>
<feature type="modified residue" description="N6-acetyllysine" evidence="3">
    <location>
        <position position="356"/>
    </location>
</feature>
<feature type="modified residue" description="Phosphothreonine" evidence="2">
    <location>
        <position position="377"/>
    </location>
</feature>
<gene>
    <name type="primary">Ssb</name>
    <name type="synonym">Ss-b</name>
</gene>